<keyword id="KW-0342">GTP-binding</keyword>
<keyword id="KW-0547">Nucleotide-binding</keyword>
<keyword id="KW-0548">Nucleotidyltransferase</keyword>
<keyword id="KW-1185">Reference proteome</keyword>
<keyword id="KW-0808">Transferase</keyword>
<dbReference type="EC" id="2.7.7.68" evidence="1"/>
<dbReference type="EMBL" id="CP000477">
    <property type="protein sequence ID" value="ABK13959.1"/>
    <property type="molecule type" value="Genomic_DNA"/>
</dbReference>
<dbReference type="RefSeq" id="WP_011695358.1">
    <property type="nucleotide sequence ID" value="NC_008553.1"/>
</dbReference>
<dbReference type="SMR" id="A0B5I5"/>
<dbReference type="STRING" id="349307.Mthe_0159"/>
<dbReference type="GeneID" id="4462833"/>
<dbReference type="KEGG" id="mtp:Mthe_0159"/>
<dbReference type="HOGENOM" id="CLU_076569_2_0_2"/>
<dbReference type="OrthoDB" id="11179at2157"/>
<dbReference type="UniPathway" id="UPA00071"/>
<dbReference type="Proteomes" id="UP000000674">
    <property type="component" value="Chromosome"/>
</dbReference>
<dbReference type="GO" id="GO:0005525">
    <property type="term" value="F:GTP binding"/>
    <property type="evidence" value="ECO:0007669"/>
    <property type="project" value="UniProtKB-KW"/>
</dbReference>
<dbReference type="GO" id="GO:0043814">
    <property type="term" value="F:phospholactate guanylyltransferase activity"/>
    <property type="evidence" value="ECO:0007669"/>
    <property type="project" value="UniProtKB-EC"/>
</dbReference>
<dbReference type="GO" id="GO:0052645">
    <property type="term" value="P:F420-0 metabolic process"/>
    <property type="evidence" value="ECO:0007669"/>
    <property type="project" value="UniProtKB-UniRule"/>
</dbReference>
<dbReference type="Gene3D" id="6.10.140.50">
    <property type="match status" value="1"/>
</dbReference>
<dbReference type="Gene3D" id="3.90.550.10">
    <property type="entry name" value="Spore Coat Polysaccharide Biosynthesis Protein SpsA, Chain A"/>
    <property type="match status" value="1"/>
</dbReference>
<dbReference type="HAMAP" id="MF_02114">
    <property type="entry name" value="CofC"/>
    <property type="match status" value="1"/>
</dbReference>
<dbReference type="InterPro" id="IPR002835">
    <property type="entry name" value="CofC"/>
</dbReference>
<dbReference type="InterPro" id="IPR029044">
    <property type="entry name" value="Nucleotide-diphossugar_trans"/>
</dbReference>
<dbReference type="NCBIfam" id="TIGR03552">
    <property type="entry name" value="F420_cofC"/>
    <property type="match status" value="1"/>
</dbReference>
<dbReference type="PANTHER" id="PTHR40392">
    <property type="entry name" value="2-PHOSPHO-L-LACTATE GUANYLYLTRANSFERASE"/>
    <property type="match status" value="1"/>
</dbReference>
<dbReference type="PANTHER" id="PTHR40392:SF1">
    <property type="entry name" value="2-PHOSPHO-L-LACTATE GUANYLYLTRANSFERASE"/>
    <property type="match status" value="1"/>
</dbReference>
<dbReference type="Pfam" id="PF01983">
    <property type="entry name" value="CofC"/>
    <property type="match status" value="1"/>
</dbReference>
<dbReference type="SUPFAM" id="SSF53448">
    <property type="entry name" value="Nucleotide-diphospho-sugar transferases"/>
    <property type="match status" value="1"/>
</dbReference>
<protein>
    <recommendedName>
        <fullName evidence="1">2-phospho-L-lactate guanylyltransferase</fullName>
        <shortName evidence="1">LP guanylyltransferase</shortName>
        <ecNumber evidence="1">2.7.7.68</ecNumber>
    </recommendedName>
</protein>
<accession>A0B5I5</accession>
<gene>
    <name evidence="1" type="primary">cofC</name>
    <name type="ordered locus">Mthe_0159</name>
</gene>
<comment type="function">
    <text evidence="1">Guanylyltransferase that catalyzes the activation of (2S)-2-phospholactate (2-PL) as (2S)-lactyl-2-diphospho-5'-guanosine, via the condensation of 2-PL with GTP. It is involved in the biosynthesis of coenzyme F420, a hydride carrier cofactor.</text>
</comment>
<comment type="catalytic activity">
    <reaction evidence="1">
        <text>(2S)-2-phospholactate + GTP + H(+) = (2S)-lactyl-2-diphospho-5'-guanosine + diphosphate</text>
        <dbReference type="Rhea" id="RHEA:63424"/>
        <dbReference type="ChEBI" id="CHEBI:15378"/>
        <dbReference type="ChEBI" id="CHEBI:33019"/>
        <dbReference type="ChEBI" id="CHEBI:37565"/>
        <dbReference type="ChEBI" id="CHEBI:59435"/>
        <dbReference type="ChEBI" id="CHEBI:59906"/>
        <dbReference type="EC" id="2.7.7.68"/>
    </reaction>
</comment>
<comment type="pathway">
    <text evidence="1">Cofactor biosynthesis; coenzyme F420 biosynthesis.</text>
</comment>
<comment type="subunit">
    <text evidence="1">Homodimer.</text>
</comment>
<comment type="similarity">
    <text evidence="1">Belongs to the CofC family.</text>
</comment>
<organism>
    <name type="scientific">Methanothrix thermoacetophila (strain DSM 6194 / JCM 14653 / NBRC 101360 / PT)</name>
    <name type="common">Methanosaeta thermophila</name>
    <dbReference type="NCBI Taxonomy" id="349307"/>
    <lineage>
        <taxon>Archaea</taxon>
        <taxon>Methanobacteriati</taxon>
        <taxon>Methanobacteriota</taxon>
        <taxon>Stenosarchaea group</taxon>
        <taxon>Methanomicrobia</taxon>
        <taxon>Methanotrichales</taxon>
        <taxon>Methanotrichaceae</taxon>
        <taxon>Methanothrix</taxon>
    </lineage>
</organism>
<evidence type="ECO:0000255" key="1">
    <source>
        <dbReference type="HAMAP-Rule" id="MF_02114"/>
    </source>
</evidence>
<reference key="1">
    <citation type="submission" date="2006-10" db="EMBL/GenBank/DDBJ databases">
        <title>Complete sequence of Methanosaeta thermophila PT.</title>
        <authorList>
            <consortium name="US DOE Joint Genome Institute"/>
            <person name="Copeland A."/>
            <person name="Lucas S."/>
            <person name="Lapidus A."/>
            <person name="Barry K."/>
            <person name="Detter J.C."/>
            <person name="Glavina del Rio T."/>
            <person name="Hammon N."/>
            <person name="Israni S."/>
            <person name="Pitluck S."/>
            <person name="Chain P."/>
            <person name="Malfatti S."/>
            <person name="Shin M."/>
            <person name="Vergez L."/>
            <person name="Schmutz J."/>
            <person name="Larimer F."/>
            <person name="Land M."/>
            <person name="Hauser L."/>
            <person name="Kyrpides N."/>
            <person name="Kim E."/>
            <person name="Smith K.S."/>
            <person name="Ingram-Smith C."/>
            <person name="Richardson P."/>
        </authorList>
    </citation>
    <scope>NUCLEOTIDE SEQUENCE [LARGE SCALE GENOMIC DNA]</scope>
    <source>
        <strain>DSM 6194 / JCM 14653 / NBRC 101360 / PT</strain>
    </source>
</reference>
<proteinExistence type="inferred from homology"/>
<sequence length="221" mass="24488">MLRPVHCVVPFKSSGCKTRLSSALSGEQRWQLAVAMLRDVLRTLRSIGMVTVLARPGMREDIIADLDATLRFSELELGDALNGFIDENTAAGWPADILIVMADLPLIREEDVLEMIRTPGGVVLAPGRGGGTNMILIRDSRFRTRYKGLSFAKHKREAEELGIEAGYCYSYRAGCDIDEPGDLIEILLHTNGESRALLERFGLRILESDGRGRLDQTQSNE</sequence>
<feature type="chain" id="PRO_0000398754" description="2-phospho-L-lactate guanylyltransferase">
    <location>
        <begin position="1"/>
        <end position="221"/>
    </location>
</feature>
<name>COFC_METTP</name>